<sequence>MGSTTQMSDYLVSTTTTSSASSMVTMTSQIENNSLNSNDNTNTTNNNNNNNNNNNNNNNNNNNNNNNNNINNNNNNGGMVGVNHKTHKKTASIGGGKNRAILHDFTFSYFIPNQNRSEDNSNENELGLNNHNVQHQGPIIHLTKNLLHFYKKCNSNFNYISSLNPRRVLTHPSEPLSNDGYDNVNSDYIVYVNDIITNNESGQKYKVLDSLGQGTFGQVVKCKNCDTDELVAIKILKNKQAYFQQGRLEIQTLKSLNDQHDPEDKNHILRLLDSFIHKMHLCIVFELLSVNLFELIKQNNFRGLSTNLIKVFLIQILDALIVLANANIIHCDLKPENILLQNVNSPAIKIIDFGSACYEKSTLYTYIQSRHYRSPEVLVGTVYCASIDMWSLGCISAELFLGLPLFPGNSEYNQISRIVEMRGIFPSDLLDKGKSSTRYFHRHLGSNSDDNNNNNNNNNGKPYYYTLKSEEDYQRDSKTTLLPSKKYFNYKTLPEIIQNYGFKKSMSPQDIEKEKQHRIVFTDFINGLLQLDPNERWSPMQAKEHPFITGQPYNGPFIPDPSKKRHFTYSQPKQIPQHSMLNGNQILNQHQLFQQLQQQQQQQQQQQQQQQQQQQQQQQQQQQQQQHNQFQQQQQQQQQQQQSSSQQHIQIQPLQLFSTPYTSTNNTPNLSSSNSGSSLNNLKKLNLPPFKQQQQQQFSTSQNSDSFNFPNESFSPRGIYIPSSASNIQQQQQPININNNQNGVGSQVSQLALGQSPSLFGTPTNIYPPYSSMYNNSPVATPNSLSFYGSSWGSDSSSISLNPSTPTQKQMFQQQQYSNNNNNNNNNNNNNSNNNNGNNTNNINSNNNNNNVNRRNRSKSDIPSDSFSSSEGMDPQFNLYQQQQQQQQQQQQQQQQQQQQQQQQQQQQQQQQQQLQYQQQFQTLQDLNIEGEKPPIYPNSPHRKRSHSGYLDQYANGYNSQQTNNTQQQQQQQQQQQQQQQQQQQQQQHPSFFSTRMHLDHFNGGSRYRSQSYGDQQFQQQQYKQQQKNLHHQQQQQQRFMQVGSPPTSHLSPPIPQSPLMMSQPLHQTYIPQQQQQQQQQQQQSQPTPFTPQMISQEPISPALMGDASSIWNPSPTEELLFTIDLPNQQNTPHLTPSNSSTNLLGKSASSPLKNSSGGAIPPTPTIPINMEEINNGFSKFHFNDQPSWNSNGNSPWMIQQQQQHQQGFNGNSESMYNDDLIGFSPYNNYSNDYRPQLFNKQSPPSSYNSNKSFYGGSGGGGNNNNNNNSRPTNQNFSNSLLPSQQQNVIFPQNSPPSSYNSSNSLSKSGGNTVKNNSNTGGRPRGDSMKQRFNSTNNLLSGGSYQYQQQQQQQQQQQQQQQQQQQQQQQQQQQQQQQYKKDTPSLMMSPPMNGLKTSSEIGIPSEEIRYQYQQQQLQQQFQQQQQQQQQQQIQQQLQQQQAPPQNRKQVVIGSYRET</sequence>
<dbReference type="EC" id="2.7.12.1"/>
<dbReference type="EMBL" id="AAFI02000056">
    <property type="protein sequence ID" value="EAL65569.1"/>
    <property type="molecule type" value="Genomic_DNA"/>
</dbReference>
<dbReference type="RefSeq" id="XP_638920.1">
    <property type="nucleotide sequence ID" value="XM_633828.1"/>
</dbReference>
<dbReference type="SMR" id="Q54QV3"/>
<dbReference type="FunCoup" id="Q54QV3">
    <property type="interactions" value="606"/>
</dbReference>
<dbReference type="STRING" id="44689.Q54QV3"/>
<dbReference type="GlyGen" id="Q54QV3">
    <property type="glycosylation" value="1 site"/>
</dbReference>
<dbReference type="PaxDb" id="44689-DDB0191191"/>
<dbReference type="EnsemblProtists" id="EAL65569">
    <property type="protein sequence ID" value="EAL65569"/>
    <property type="gene ID" value="DDB_G0283605"/>
</dbReference>
<dbReference type="GeneID" id="8624159"/>
<dbReference type="KEGG" id="ddi:DDB_G0283605"/>
<dbReference type="dictyBase" id="DDB_G0283605">
    <property type="gene designation" value="yakA"/>
</dbReference>
<dbReference type="VEuPathDB" id="AmoebaDB:DDB_G0283605"/>
<dbReference type="eggNOG" id="KOG0667">
    <property type="taxonomic scope" value="Eukaryota"/>
</dbReference>
<dbReference type="HOGENOM" id="CLU_250928_0_0_1"/>
<dbReference type="InParanoid" id="Q54QV3"/>
<dbReference type="OMA" id="HRYIYKD"/>
<dbReference type="Reactome" id="R-DDI-3899300">
    <property type="pathway name" value="SUMOylation of transcription cofactors"/>
</dbReference>
<dbReference type="PRO" id="PR:Q54QV3"/>
<dbReference type="Proteomes" id="UP000002195">
    <property type="component" value="Chromosome 4"/>
</dbReference>
<dbReference type="GO" id="GO:0005737">
    <property type="term" value="C:cytoplasm"/>
    <property type="evidence" value="ECO:0000314"/>
    <property type="project" value="dictyBase"/>
</dbReference>
<dbReference type="GO" id="GO:0005829">
    <property type="term" value="C:cytosol"/>
    <property type="evidence" value="ECO:0000304"/>
    <property type="project" value="dictyBase"/>
</dbReference>
<dbReference type="GO" id="GO:0005524">
    <property type="term" value="F:ATP binding"/>
    <property type="evidence" value="ECO:0007669"/>
    <property type="project" value="UniProtKB-KW"/>
</dbReference>
<dbReference type="GO" id="GO:0004672">
    <property type="term" value="F:protein kinase activity"/>
    <property type="evidence" value="ECO:0000314"/>
    <property type="project" value="dictyBase"/>
</dbReference>
<dbReference type="GO" id="GO:0106310">
    <property type="term" value="F:protein serine kinase activity"/>
    <property type="evidence" value="ECO:0007669"/>
    <property type="project" value="RHEA"/>
</dbReference>
<dbReference type="GO" id="GO:0004674">
    <property type="term" value="F:protein serine/threonine kinase activity"/>
    <property type="evidence" value="ECO:0000318"/>
    <property type="project" value="GO_Central"/>
</dbReference>
<dbReference type="GO" id="GO:0004712">
    <property type="term" value="F:protein serine/threonine/tyrosine kinase activity"/>
    <property type="evidence" value="ECO:0007669"/>
    <property type="project" value="UniProtKB-EC"/>
</dbReference>
<dbReference type="GO" id="GO:0004713">
    <property type="term" value="F:protein tyrosine kinase activity"/>
    <property type="evidence" value="ECO:0000318"/>
    <property type="project" value="GO_Central"/>
</dbReference>
<dbReference type="GO" id="GO:0140582">
    <property type="term" value="P:adenylate cyclase-activating G protein-coupled cAMP receptor signaling pathway"/>
    <property type="evidence" value="ECO:0000315"/>
    <property type="project" value="dictyBase"/>
</dbReference>
<dbReference type="GO" id="GO:0031152">
    <property type="term" value="P:aggregation involved in sorocarp development"/>
    <property type="evidence" value="ECO:0000304"/>
    <property type="project" value="dictyBase"/>
</dbReference>
<dbReference type="GO" id="GO:0006935">
    <property type="term" value="P:chemotaxis"/>
    <property type="evidence" value="ECO:0000304"/>
    <property type="project" value="dictyBase"/>
</dbReference>
<dbReference type="GO" id="GO:0006972">
    <property type="term" value="P:hyperosmotic response"/>
    <property type="evidence" value="ECO:0000270"/>
    <property type="project" value="dictyBase"/>
</dbReference>
<dbReference type="GO" id="GO:0010629">
    <property type="term" value="P:negative regulation of gene expression"/>
    <property type="evidence" value="ECO:0000315"/>
    <property type="project" value="dictyBase"/>
</dbReference>
<dbReference type="GO" id="GO:0010628">
    <property type="term" value="P:positive regulation of gene expression"/>
    <property type="evidence" value="ECO:0000315"/>
    <property type="project" value="dictyBase"/>
</dbReference>
<dbReference type="GO" id="GO:0008277">
    <property type="term" value="P:regulation of G protein-coupled receptor signaling pathway"/>
    <property type="evidence" value="ECO:0000315"/>
    <property type="project" value="dictyBase"/>
</dbReference>
<dbReference type="GO" id="GO:0010468">
    <property type="term" value="P:regulation of gene expression"/>
    <property type="evidence" value="ECO:0000315"/>
    <property type="project" value="dictyBase"/>
</dbReference>
<dbReference type="GO" id="GO:1904643">
    <property type="term" value="P:response to curcumin"/>
    <property type="evidence" value="ECO:0000314"/>
    <property type="project" value="dictyBase"/>
</dbReference>
<dbReference type="GO" id="GO:0051409">
    <property type="term" value="P:response to nitrosative stress"/>
    <property type="evidence" value="ECO:0000315"/>
    <property type="project" value="dictyBase"/>
</dbReference>
<dbReference type="GO" id="GO:0006979">
    <property type="term" value="P:response to oxidative stress"/>
    <property type="evidence" value="ECO:0000315"/>
    <property type="project" value="dictyBase"/>
</dbReference>
<dbReference type="GO" id="GO:0010225">
    <property type="term" value="P:response to UV-C"/>
    <property type="evidence" value="ECO:0000314"/>
    <property type="project" value="dictyBase"/>
</dbReference>
<dbReference type="GO" id="GO:0007165">
    <property type="term" value="P:signal transduction"/>
    <property type="evidence" value="ECO:0000304"/>
    <property type="project" value="dictyBase"/>
</dbReference>
<dbReference type="GO" id="GO:0030587">
    <property type="term" value="P:sorocarp development"/>
    <property type="evidence" value="ECO:0007001"/>
    <property type="project" value="dictyBase"/>
</dbReference>
<dbReference type="CDD" id="cd14212">
    <property type="entry name" value="PKc_YAK1"/>
    <property type="match status" value="1"/>
</dbReference>
<dbReference type="FunFam" id="3.30.200.20:FF:000087">
    <property type="entry name" value="Dual specificity tyrosine-phosphorylation-regulated kinase 1A"/>
    <property type="match status" value="1"/>
</dbReference>
<dbReference type="Gene3D" id="3.30.200.20">
    <property type="entry name" value="Phosphorylase Kinase, domain 1"/>
    <property type="match status" value="1"/>
</dbReference>
<dbReference type="Gene3D" id="1.10.510.10">
    <property type="entry name" value="Transferase(Phosphotransferase) domain 1"/>
    <property type="match status" value="1"/>
</dbReference>
<dbReference type="InterPro" id="IPR011009">
    <property type="entry name" value="Kinase-like_dom_sf"/>
</dbReference>
<dbReference type="InterPro" id="IPR000719">
    <property type="entry name" value="Prot_kinase_dom"/>
</dbReference>
<dbReference type="InterPro" id="IPR017441">
    <property type="entry name" value="Protein_kinase_ATP_BS"/>
</dbReference>
<dbReference type="InterPro" id="IPR008271">
    <property type="entry name" value="Ser/Thr_kinase_AS"/>
</dbReference>
<dbReference type="InterPro" id="IPR050494">
    <property type="entry name" value="Ser_Thr_dual-spec_kinase"/>
</dbReference>
<dbReference type="PANTHER" id="PTHR24058">
    <property type="entry name" value="DUAL SPECIFICITY PROTEIN KINASE"/>
    <property type="match status" value="1"/>
</dbReference>
<dbReference type="PANTHER" id="PTHR24058:SF17">
    <property type="entry name" value="HOMEODOMAIN INTERACTING PROTEIN KINASE, ISOFORM D"/>
    <property type="match status" value="1"/>
</dbReference>
<dbReference type="Pfam" id="PF00069">
    <property type="entry name" value="Pkinase"/>
    <property type="match status" value="1"/>
</dbReference>
<dbReference type="SMART" id="SM00220">
    <property type="entry name" value="S_TKc"/>
    <property type="match status" value="1"/>
</dbReference>
<dbReference type="SUPFAM" id="SSF56112">
    <property type="entry name" value="Protein kinase-like (PK-like)"/>
    <property type="match status" value="1"/>
</dbReference>
<dbReference type="PROSITE" id="PS00107">
    <property type="entry name" value="PROTEIN_KINASE_ATP"/>
    <property type="match status" value="1"/>
</dbReference>
<dbReference type="PROSITE" id="PS50011">
    <property type="entry name" value="PROTEIN_KINASE_DOM"/>
    <property type="match status" value="1"/>
</dbReference>
<dbReference type="PROSITE" id="PS00108">
    <property type="entry name" value="PROTEIN_KINASE_ST"/>
    <property type="match status" value="1"/>
</dbReference>
<comment type="function">
    <text evidence="5 6 7 8">General sensor of environmental conditions, such as heat stress, effecting changes through pkaC. Essential for survival to nitrosoative and oxidative stresses. Required for cell cycle control, not only at the onset but also during development (aggregation process and postaggregative development).</text>
</comment>
<comment type="catalytic activity">
    <reaction>
        <text>L-seryl-[protein] + ATP = O-phospho-L-seryl-[protein] + ADP + H(+)</text>
        <dbReference type="Rhea" id="RHEA:17989"/>
        <dbReference type="Rhea" id="RHEA-COMP:9863"/>
        <dbReference type="Rhea" id="RHEA-COMP:11604"/>
        <dbReference type="ChEBI" id="CHEBI:15378"/>
        <dbReference type="ChEBI" id="CHEBI:29999"/>
        <dbReference type="ChEBI" id="CHEBI:30616"/>
        <dbReference type="ChEBI" id="CHEBI:83421"/>
        <dbReference type="ChEBI" id="CHEBI:456216"/>
        <dbReference type="EC" id="2.7.12.1"/>
    </reaction>
</comment>
<comment type="catalytic activity">
    <reaction>
        <text>L-threonyl-[protein] + ATP = O-phospho-L-threonyl-[protein] + ADP + H(+)</text>
        <dbReference type="Rhea" id="RHEA:46608"/>
        <dbReference type="Rhea" id="RHEA-COMP:11060"/>
        <dbReference type="Rhea" id="RHEA-COMP:11605"/>
        <dbReference type="ChEBI" id="CHEBI:15378"/>
        <dbReference type="ChEBI" id="CHEBI:30013"/>
        <dbReference type="ChEBI" id="CHEBI:30616"/>
        <dbReference type="ChEBI" id="CHEBI:61977"/>
        <dbReference type="ChEBI" id="CHEBI:456216"/>
        <dbReference type="EC" id="2.7.12.1"/>
    </reaction>
</comment>
<comment type="catalytic activity">
    <reaction>
        <text>L-tyrosyl-[protein] + ATP = O-phospho-L-tyrosyl-[protein] + ADP + H(+)</text>
        <dbReference type="Rhea" id="RHEA:10596"/>
        <dbReference type="Rhea" id="RHEA-COMP:10136"/>
        <dbReference type="Rhea" id="RHEA-COMP:20101"/>
        <dbReference type="ChEBI" id="CHEBI:15378"/>
        <dbReference type="ChEBI" id="CHEBI:30616"/>
        <dbReference type="ChEBI" id="CHEBI:46858"/>
        <dbReference type="ChEBI" id="CHEBI:61978"/>
        <dbReference type="ChEBI" id="CHEBI:456216"/>
        <dbReference type="EC" id="2.7.12.1"/>
    </reaction>
</comment>
<comment type="subcellular location">
    <subcellularLocation>
        <location evidence="6">Cytoplasm</location>
    </subcellularLocation>
</comment>
<comment type="developmental stage">
    <text evidence="8">Expressed during growth-to-development stages with increase in cell density.</text>
</comment>
<comment type="disruption phenotype">
    <text evidence="5 6 7">Null cells fail to enter development, express low levels of cAMP receptors, are smaller than wild-type cells, are hypersensitive to nitrosoative/oxidative stress, and display slow growth on bacterial lawns.</text>
</comment>
<comment type="similarity">
    <text evidence="9">Belongs to the protein kinase superfamily. CMGC Ser/Thr protein kinase family. MNB/DYRK subfamily.</text>
</comment>
<proteinExistence type="evidence at protein level"/>
<feature type="chain" id="PRO_0000362075" description="Probable serine/threonine-protein kinase yakA">
    <location>
        <begin position="1"/>
        <end position="1458"/>
    </location>
</feature>
<feature type="domain" description="Protein kinase" evidence="2">
    <location>
        <begin position="205"/>
        <end position="548"/>
    </location>
</feature>
<feature type="region of interest" description="Disordered" evidence="4">
    <location>
        <begin position="32"/>
        <end position="83"/>
    </location>
</feature>
<feature type="region of interest" description="Disordered" evidence="4">
    <location>
        <begin position="441"/>
        <end position="462"/>
    </location>
</feature>
<feature type="region of interest" description="Disordered" evidence="4">
    <location>
        <begin position="545"/>
        <end position="571"/>
    </location>
</feature>
<feature type="region of interest" description="Disordered" evidence="4">
    <location>
        <begin position="659"/>
        <end position="714"/>
    </location>
</feature>
<feature type="region of interest" description="Disordered" evidence="4">
    <location>
        <begin position="791"/>
        <end position="874"/>
    </location>
</feature>
<feature type="region of interest" description="Disordered" evidence="4">
    <location>
        <begin position="930"/>
        <end position="1095"/>
    </location>
</feature>
<feature type="region of interest" description="Disordered" evidence="4">
    <location>
        <begin position="1128"/>
        <end position="1161"/>
    </location>
</feature>
<feature type="region of interest" description="Disordered" evidence="4">
    <location>
        <begin position="1233"/>
        <end position="1347"/>
    </location>
</feature>
<feature type="region of interest" description="Disordered" evidence="4">
    <location>
        <begin position="1375"/>
        <end position="1399"/>
    </location>
</feature>
<feature type="region of interest" description="Disordered" evidence="4">
    <location>
        <begin position="1435"/>
        <end position="1458"/>
    </location>
</feature>
<feature type="coiled-coil region" evidence="1">
    <location>
        <begin position="588"/>
        <end position="643"/>
    </location>
</feature>
<feature type="coiled-coil region" evidence="1">
    <location>
        <begin position="878"/>
        <end position="927"/>
    </location>
</feature>
<feature type="coiled-coil region" evidence="1">
    <location>
        <begin position="1346"/>
        <end position="1383"/>
    </location>
</feature>
<feature type="coiled-coil region" evidence="1">
    <location>
        <begin position="1409"/>
        <end position="1442"/>
    </location>
</feature>
<feature type="compositionally biased region" description="Low complexity" evidence="4">
    <location>
        <begin position="32"/>
        <end position="76"/>
    </location>
</feature>
<feature type="compositionally biased region" description="Low complexity" evidence="4">
    <location>
        <begin position="446"/>
        <end position="459"/>
    </location>
</feature>
<feature type="compositionally biased region" description="Low complexity" evidence="4">
    <location>
        <begin position="659"/>
        <end position="709"/>
    </location>
</feature>
<feature type="compositionally biased region" description="Low complexity" evidence="4">
    <location>
        <begin position="791"/>
        <end position="800"/>
    </location>
</feature>
<feature type="compositionally biased region" description="Low complexity" evidence="4">
    <location>
        <begin position="808"/>
        <end position="853"/>
    </location>
</feature>
<feature type="compositionally biased region" description="Low complexity" evidence="4">
    <location>
        <begin position="861"/>
        <end position="870"/>
    </location>
</feature>
<feature type="compositionally biased region" description="Low complexity" evidence="4">
    <location>
        <begin position="961"/>
        <end position="988"/>
    </location>
</feature>
<feature type="compositionally biased region" description="Low complexity" evidence="4">
    <location>
        <begin position="1016"/>
        <end position="1042"/>
    </location>
</feature>
<feature type="compositionally biased region" description="Low complexity" evidence="4">
    <location>
        <begin position="1064"/>
        <end position="1093"/>
    </location>
</feature>
<feature type="compositionally biased region" description="Polar residues" evidence="4">
    <location>
        <begin position="1128"/>
        <end position="1158"/>
    </location>
</feature>
<feature type="compositionally biased region" description="Polar residues" evidence="4">
    <location>
        <begin position="1233"/>
        <end position="1245"/>
    </location>
</feature>
<feature type="compositionally biased region" description="Low complexity" evidence="4">
    <location>
        <begin position="1246"/>
        <end position="1255"/>
    </location>
</feature>
<feature type="compositionally biased region" description="Low complexity" evidence="4">
    <location>
        <begin position="1264"/>
        <end position="1279"/>
    </location>
</feature>
<feature type="compositionally biased region" description="Polar residues" evidence="4">
    <location>
        <begin position="1280"/>
        <end position="1291"/>
    </location>
</feature>
<feature type="compositionally biased region" description="Low complexity" evidence="4">
    <location>
        <begin position="1292"/>
        <end position="1309"/>
    </location>
</feature>
<feature type="compositionally biased region" description="Polar residues" evidence="4">
    <location>
        <begin position="1310"/>
        <end position="1321"/>
    </location>
</feature>
<feature type="compositionally biased region" description="Polar residues" evidence="4">
    <location>
        <begin position="1331"/>
        <end position="1344"/>
    </location>
</feature>
<feature type="active site" description="Proton acceptor" evidence="2 3">
    <location>
        <position position="332"/>
    </location>
</feature>
<feature type="binding site" evidence="2">
    <location>
        <begin position="211"/>
        <end position="219"/>
    </location>
    <ligand>
        <name>ATP</name>
        <dbReference type="ChEBI" id="CHEBI:30616"/>
    </ligand>
</feature>
<feature type="binding site" evidence="2">
    <location>
        <position position="234"/>
    </location>
    <ligand>
        <name>ATP</name>
        <dbReference type="ChEBI" id="CHEBI:30616"/>
    </ligand>
</feature>
<feature type="mutagenesis site" description="Causes a temperature-sensitive phenotype, which fails to develop at restrictive temperature." evidence="6">
    <original>P</original>
    <variation>S</variation>
    <location>
        <position position="375"/>
    </location>
</feature>
<reference key="1">
    <citation type="journal article" date="2005" name="Nature">
        <title>The genome of the social amoeba Dictyostelium discoideum.</title>
        <authorList>
            <person name="Eichinger L."/>
            <person name="Pachebat J.A."/>
            <person name="Gloeckner G."/>
            <person name="Rajandream M.A."/>
            <person name="Sucgang R."/>
            <person name="Berriman M."/>
            <person name="Song J."/>
            <person name="Olsen R."/>
            <person name="Szafranski K."/>
            <person name="Xu Q."/>
            <person name="Tunggal B."/>
            <person name="Kummerfeld S."/>
            <person name="Madera M."/>
            <person name="Konfortov B.A."/>
            <person name="Rivero F."/>
            <person name="Bankier A.T."/>
            <person name="Lehmann R."/>
            <person name="Hamlin N."/>
            <person name="Davies R."/>
            <person name="Gaudet P."/>
            <person name="Fey P."/>
            <person name="Pilcher K."/>
            <person name="Chen G."/>
            <person name="Saunders D."/>
            <person name="Sodergren E.J."/>
            <person name="Davis P."/>
            <person name="Kerhornou A."/>
            <person name="Nie X."/>
            <person name="Hall N."/>
            <person name="Anjard C."/>
            <person name="Hemphill L."/>
            <person name="Bason N."/>
            <person name="Farbrother P."/>
            <person name="Desany B."/>
            <person name="Just E."/>
            <person name="Morio T."/>
            <person name="Rost R."/>
            <person name="Churcher C.M."/>
            <person name="Cooper J."/>
            <person name="Haydock S."/>
            <person name="van Driessche N."/>
            <person name="Cronin A."/>
            <person name="Goodhead I."/>
            <person name="Muzny D.M."/>
            <person name="Mourier T."/>
            <person name="Pain A."/>
            <person name="Lu M."/>
            <person name="Harper D."/>
            <person name="Lindsay R."/>
            <person name="Hauser H."/>
            <person name="James K.D."/>
            <person name="Quiles M."/>
            <person name="Madan Babu M."/>
            <person name="Saito T."/>
            <person name="Buchrieser C."/>
            <person name="Wardroper A."/>
            <person name="Felder M."/>
            <person name="Thangavelu M."/>
            <person name="Johnson D."/>
            <person name="Knights A."/>
            <person name="Loulseged H."/>
            <person name="Mungall K.L."/>
            <person name="Oliver K."/>
            <person name="Price C."/>
            <person name="Quail M.A."/>
            <person name="Urushihara H."/>
            <person name="Hernandez J."/>
            <person name="Rabbinowitsch E."/>
            <person name="Steffen D."/>
            <person name="Sanders M."/>
            <person name="Ma J."/>
            <person name="Kohara Y."/>
            <person name="Sharp S."/>
            <person name="Simmonds M.N."/>
            <person name="Spiegler S."/>
            <person name="Tivey A."/>
            <person name="Sugano S."/>
            <person name="White B."/>
            <person name="Walker D."/>
            <person name="Woodward J.R."/>
            <person name="Winckler T."/>
            <person name="Tanaka Y."/>
            <person name="Shaulsky G."/>
            <person name="Schleicher M."/>
            <person name="Weinstock G.M."/>
            <person name="Rosenthal A."/>
            <person name="Cox E.C."/>
            <person name="Chisholm R.L."/>
            <person name="Gibbs R.A."/>
            <person name="Loomis W.F."/>
            <person name="Platzer M."/>
            <person name="Kay R.R."/>
            <person name="Williams J.G."/>
            <person name="Dear P.H."/>
            <person name="Noegel A.A."/>
            <person name="Barrell B.G."/>
            <person name="Kuspa A."/>
        </authorList>
    </citation>
    <scope>NUCLEOTIDE SEQUENCE [LARGE SCALE GENOMIC DNA]</scope>
    <source>
        <strain>AX4</strain>
    </source>
</reference>
<reference key="2">
    <citation type="journal article" date="1998" name="Development">
        <title>YakA, a protein kinase required for the transition from growth to development in Dictyostelium.</title>
        <authorList>
            <person name="Souza G.M."/>
            <person name="Lu S."/>
            <person name="Kuspa A."/>
        </authorList>
    </citation>
    <scope>DEVELOPMENTAL STAGE</scope>
    <scope>FUNCTION</scope>
</reference>
<reference key="3">
    <citation type="journal article" date="1999" name="Development">
        <title>Starvation promotes Dictyostelium development by relieving PufA inhibition of PKA translation through the YakA kinase pathway.</title>
        <authorList>
            <person name="Souza G.M."/>
            <person name="da Silva A.M."/>
            <person name="Kuspa A."/>
        </authorList>
    </citation>
    <scope>FUNCTION</scope>
    <scope>DISRUPTION PHENOTYPE</scope>
</reference>
<reference key="4">
    <citation type="journal article" date="2001" name="J. Biol. Chem.">
        <title>The protein kinase YakA regulates G-protein-linked signaling responses during growth and development of Dictyostelium.</title>
        <authorList>
            <person name="van Es S."/>
            <person name="Weening K.E."/>
            <person name="Devreotes P.N."/>
        </authorList>
    </citation>
    <scope>MUTAGENESIS OF PRO-375</scope>
    <scope>DISRUPTION PHENOTYPE</scope>
    <scope>SUBCELLULAR LOCATION</scope>
    <scope>FUNCTION</scope>
</reference>
<reference key="5">
    <citation type="journal article" date="2002" name="Mol. Biol. Cell">
        <title>Role for YakA, cAMP, and protein kinase A in regulation of stress responses of Dictyostelium discoideum cells.</title>
        <authorList>
            <person name="Taminato A."/>
            <person name="Bagattini R."/>
            <person name="Gorjao R."/>
            <person name="Chen G."/>
            <person name="Kuspa A."/>
            <person name="Souza G.M."/>
        </authorList>
    </citation>
    <scope>FUNCTION</scope>
    <scope>DISRUPTION PHENOTYPE</scope>
</reference>
<gene>
    <name type="primary">yakA</name>
    <name type="synonym">dagB</name>
    <name type="ORF">DDB_G0283605</name>
</gene>
<accession>Q54QV3</accession>
<protein>
    <recommendedName>
        <fullName>Probable serine/threonine-protein kinase yakA</fullName>
        <ecNumber>2.7.12.1</ecNumber>
    </recommendedName>
</protein>
<name>YAKA_DICDI</name>
<evidence type="ECO:0000255" key="1"/>
<evidence type="ECO:0000255" key="2">
    <source>
        <dbReference type="PROSITE-ProRule" id="PRU00159"/>
    </source>
</evidence>
<evidence type="ECO:0000255" key="3">
    <source>
        <dbReference type="PROSITE-ProRule" id="PRU10027"/>
    </source>
</evidence>
<evidence type="ECO:0000256" key="4">
    <source>
        <dbReference type="SAM" id="MobiDB-lite"/>
    </source>
</evidence>
<evidence type="ECO:0000269" key="5">
    <source>
    </source>
</evidence>
<evidence type="ECO:0000269" key="6">
    <source>
    </source>
</evidence>
<evidence type="ECO:0000269" key="7">
    <source>
    </source>
</evidence>
<evidence type="ECO:0000269" key="8">
    <source>
    </source>
</evidence>
<evidence type="ECO:0000305" key="9"/>
<keyword id="KW-0067">ATP-binding</keyword>
<keyword id="KW-0175">Coiled coil</keyword>
<keyword id="KW-0963">Cytoplasm</keyword>
<keyword id="KW-0418">Kinase</keyword>
<keyword id="KW-0547">Nucleotide-binding</keyword>
<keyword id="KW-1185">Reference proteome</keyword>
<keyword id="KW-0723">Serine/threonine-protein kinase</keyword>
<keyword id="KW-0808">Transferase</keyword>
<organism>
    <name type="scientific">Dictyostelium discoideum</name>
    <name type="common">Social amoeba</name>
    <dbReference type="NCBI Taxonomy" id="44689"/>
    <lineage>
        <taxon>Eukaryota</taxon>
        <taxon>Amoebozoa</taxon>
        <taxon>Evosea</taxon>
        <taxon>Eumycetozoa</taxon>
        <taxon>Dictyostelia</taxon>
        <taxon>Dictyosteliales</taxon>
        <taxon>Dictyosteliaceae</taxon>
        <taxon>Dictyostelium</taxon>
    </lineage>
</organism>